<evidence type="ECO:0000250" key="1">
    <source>
        <dbReference type="UniProtKB" id="O95858"/>
    </source>
</evidence>
<evidence type="ECO:0000250" key="2">
    <source>
        <dbReference type="UniProtKB" id="P62079"/>
    </source>
</evidence>
<evidence type="ECO:0000255" key="3"/>
<evidence type="ECO:0000305" key="4"/>
<accession>Q68VK5</accession>
<accession>Q498N9</accession>
<proteinExistence type="evidence at transcript level"/>
<name>TSN5_RAT</name>
<comment type="function">
    <text evidence="2">Part of TspanC8 subgroup, composed of 6 members that interact with the transmembrane metalloprotease ADAM10. This interaction is required for ADAM10 exit from the endoplasmic reticulum and for enzymatic maturation and trafficking to the cell surface as well as substrate specificity. Different TspanC8/ADAM10 complexes have distinct substrates. Promotes ADAM10-mediated cleavage of CD44. Seems to regulate VE-cadherin expression in endothelial cells probably through interaction with ADAM10, promoting leukocyte transmigration.</text>
</comment>
<comment type="subunit">
    <text evidence="2">Interacts with ADAM10; the interaction influences ADAM10 substrate specificity, endocytosis and turnover.</text>
</comment>
<comment type="subcellular location">
    <subcellularLocation>
        <location evidence="2">Cell membrane</location>
        <topology evidence="4">Multi-pass membrane protein</topology>
    </subcellularLocation>
</comment>
<comment type="PTM">
    <text evidence="2">Palmitoylated.</text>
</comment>
<comment type="similarity">
    <text evidence="4">Belongs to the tetraspanin (TM4SF) family.</text>
</comment>
<keyword id="KW-1003">Cell membrane</keyword>
<keyword id="KW-1015">Disulfide bond</keyword>
<keyword id="KW-0325">Glycoprotein</keyword>
<keyword id="KW-0472">Membrane</keyword>
<keyword id="KW-1185">Reference proteome</keyword>
<keyword id="KW-0812">Transmembrane</keyword>
<keyword id="KW-1133">Transmembrane helix</keyword>
<dbReference type="EMBL" id="AF540877">
    <property type="protein sequence ID" value="AAQ11226.1"/>
    <property type="molecule type" value="mRNA"/>
</dbReference>
<dbReference type="EMBL" id="BC100135">
    <property type="protein sequence ID" value="AAI00136.1"/>
    <property type="molecule type" value="mRNA"/>
</dbReference>
<dbReference type="RefSeq" id="NP_001004090.2">
    <property type="nucleotide sequence ID" value="NM_001004090.2"/>
</dbReference>
<dbReference type="SMR" id="Q68VK5"/>
<dbReference type="FunCoup" id="Q68VK5">
    <property type="interactions" value="1921"/>
</dbReference>
<dbReference type="STRING" id="10116.ENSRNOP00000021381"/>
<dbReference type="GlyCosmos" id="Q68VK5">
    <property type="glycosylation" value="4 sites, No reported glycans"/>
</dbReference>
<dbReference type="GlyGen" id="Q68VK5">
    <property type="glycosylation" value="4 sites"/>
</dbReference>
<dbReference type="PhosphoSitePlus" id="Q68VK5"/>
<dbReference type="PaxDb" id="10116-ENSRNOP00000021381"/>
<dbReference type="Ensembl" id="ENSRNOT00000021381.6">
    <property type="protein sequence ID" value="ENSRNOP00000021381.4"/>
    <property type="gene ID" value="ENSRNOG00000015913.6"/>
</dbReference>
<dbReference type="GeneID" id="362048"/>
<dbReference type="KEGG" id="rno:362048"/>
<dbReference type="AGR" id="RGD:1303176"/>
<dbReference type="CTD" id="10098"/>
<dbReference type="RGD" id="1303176">
    <property type="gene designation" value="Tspan5"/>
</dbReference>
<dbReference type="eggNOG" id="KOG3882">
    <property type="taxonomic scope" value="Eukaryota"/>
</dbReference>
<dbReference type="GeneTree" id="ENSGT00940000161376"/>
<dbReference type="HOGENOM" id="CLU_055524_0_2_1"/>
<dbReference type="InParanoid" id="Q68VK5"/>
<dbReference type="OMA" id="DPMYGFI"/>
<dbReference type="OrthoDB" id="2014092at2759"/>
<dbReference type="PhylomeDB" id="Q68VK5"/>
<dbReference type="TreeFam" id="TF313002"/>
<dbReference type="PRO" id="PR:Q68VK5"/>
<dbReference type="Proteomes" id="UP000002494">
    <property type="component" value="Chromosome 2"/>
</dbReference>
<dbReference type="Bgee" id="ENSRNOG00000015913">
    <property type="expression patterns" value="Expressed in frontal cortex and 19 other cell types or tissues"/>
</dbReference>
<dbReference type="GO" id="GO:0005654">
    <property type="term" value="C:nucleoplasm"/>
    <property type="evidence" value="ECO:0007669"/>
    <property type="project" value="Ensembl"/>
</dbReference>
<dbReference type="GO" id="GO:0005886">
    <property type="term" value="C:plasma membrane"/>
    <property type="evidence" value="ECO:0000250"/>
    <property type="project" value="UniProtKB"/>
</dbReference>
<dbReference type="GO" id="GO:0019899">
    <property type="term" value="F:enzyme binding"/>
    <property type="evidence" value="ECO:0000266"/>
    <property type="project" value="RGD"/>
</dbReference>
<dbReference type="GO" id="GO:0007155">
    <property type="term" value="P:cell adhesion"/>
    <property type="evidence" value="ECO:0000304"/>
    <property type="project" value="RGD"/>
</dbReference>
<dbReference type="GO" id="GO:0045747">
    <property type="term" value="P:positive regulation of Notch signaling pathway"/>
    <property type="evidence" value="ECO:0000266"/>
    <property type="project" value="RGD"/>
</dbReference>
<dbReference type="GO" id="GO:0072659">
    <property type="term" value="P:protein localization to plasma membrane"/>
    <property type="evidence" value="ECO:0000266"/>
    <property type="project" value="RGD"/>
</dbReference>
<dbReference type="GO" id="GO:0051604">
    <property type="term" value="P:protein maturation"/>
    <property type="evidence" value="ECO:0000266"/>
    <property type="project" value="RGD"/>
</dbReference>
<dbReference type="GO" id="GO:0051043">
    <property type="term" value="P:regulation of membrane protein ectodomain proteolysis"/>
    <property type="evidence" value="ECO:0000250"/>
    <property type="project" value="UniProtKB"/>
</dbReference>
<dbReference type="CDD" id="cd03159">
    <property type="entry name" value="TM4SF9_like_LEL"/>
    <property type="match status" value="1"/>
</dbReference>
<dbReference type="FunFam" id="1.10.1450.10:FF:000001">
    <property type="entry name" value="Tetraspanin"/>
    <property type="match status" value="1"/>
</dbReference>
<dbReference type="Gene3D" id="1.10.1450.10">
    <property type="entry name" value="Tetraspanin"/>
    <property type="match status" value="1"/>
</dbReference>
<dbReference type="InterPro" id="IPR018499">
    <property type="entry name" value="Tetraspanin/Peripherin"/>
</dbReference>
<dbReference type="InterPro" id="IPR000301">
    <property type="entry name" value="Tetraspanin_animals"/>
</dbReference>
<dbReference type="InterPro" id="IPR018503">
    <property type="entry name" value="Tetraspanin_CS"/>
</dbReference>
<dbReference type="InterPro" id="IPR008952">
    <property type="entry name" value="Tetraspanin_EC2_sf"/>
</dbReference>
<dbReference type="PANTHER" id="PTHR19282">
    <property type="entry name" value="TETRASPANIN"/>
    <property type="match status" value="1"/>
</dbReference>
<dbReference type="PANTHER" id="PTHR19282:SF63">
    <property type="entry name" value="TETRASPANIN-5"/>
    <property type="match status" value="1"/>
</dbReference>
<dbReference type="Pfam" id="PF00335">
    <property type="entry name" value="Tetraspanin"/>
    <property type="match status" value="1"/>
</dbReference>
<dbReference type="PIRSF" id="PIRSF002419">
    <property type="entry name" value="Tetraspanin"/>
    <property type="match status" value="1"/>
</dbReference>
<dbReference type="PRINTS" id="PR00259">
    <property type="entry name" value="TMFOUR"/>
</dbReference>
<dbReference type="SUPFAM" id="SSF48652">
    <property type="entry name" value="Tetraspanin"/>
    <property type="match status" value="1"/>
</dbReference>
<dbReference type="PROSITE" id="PS00421">
    <property type="entry name" value="TM4_1"/>
    <property type="match status" value="1"/>
</dbReference>
<gene>
    <name type="primary">Tspan5</name>
    <name type="synonym">Tm4sf9</name>
</gene>
<protein>
    <recommendedName>
        <fullName>Tetraspanin-5</fullName>
        <shortName>Tspan-5</shortName>
    </recommendedName>
    <alternativeName>
        <fullName>Transmembrane 4 superfamily member 9</fullName>
    </alternativeName>
</protein>
<feature type="chain" id="PRO_0000219245" description="Tetraspanin-5">
    <location>
        <begin position="1"/>
        <end position="268"/>
    </location>
</feature>
<feature type="topological domain" description="Cytoplasmic" evidence="3">
    <location>
        <begin position="1"/>
        <end position="17"/>
    </location>
</feature>
<feature type="transmembrane region" description="Helical" evidence="3">
    <location>
        <begin position="18"/>
        <end position="38"/>
    </location>
</feature>
<feature type="topological domain" description="Extracellular" evidence="3">
    <location>
        <begin position="39"/>
        <end position="61"/>
    </location>
</feature>
<feature type="transmembrane region" description="Helical" evidence="3">
    <location>
        <begin position="62"/>
        <end position="82"/>
    </location>
</feature>
<feature type="topological domain" description="Cytoplasmic" evidence="3">
    <location>
        <begin position="83"/>
        <end position="92"/>
    </location>
</feature>
<feature type="transmembrane region" description="Helical" evidence="3">
    <location>
        <begin position="93"/>
        <end position="113"/>
    </location>
</feature>
<feature type="topological domain" description="Extracellular" evidence="3">
    <location>
        <begin position="114"/>
        <end position="232"/>
    </location>
</feature>
<feature type="transmembrane region" description="Helical" evidence="3">
    <location>
        <begin position="233"/>
        <end position="253"/>
    </location>
</feature>
<feature type="topological domain" description="Cytoplasmic" evidence="3">
    <location>
        <begin position="254"/>
        <end position="268"/>
    </location>
</feature>
<feature type="glycosylation site" description="N-linked (GlcNAc...) asparagine" evidence="3">
    <location>
        <position position="49"/>
    </location>
</feature>
<feature type="glycosylation site" description="N-linked (GlcNAc...) asparagine" evidence="3">
    <location>
        <position position="169"/>
    </location>
</feature>
<feature type="glycosylation site" description="N-linked (GlcNAc...) asparagine" evidence="3">
    <location>
        <position position="174"/>
    </location>
</feature>
<feature type="glycosylation site" description="N-linked (GlcNAc...) asparagine" evidence="3">
    <location>
        <position position="232"/>
    </location>
</feature>
<feature type="disulfide bond" evidence="1">
    <location>
        <begin position="153"/>
        <end position="221"/>
    </location>
</feature>
<feature type="disulfide bond" evidence="1">
    <location>
        <begin position="154"/>
        <end position="186"/>
    </location>
</feature>
<feature type="disulfide bond" evidence="1">
    <location>
        <begin position="170"/>
        <end position="180"/>
    </location>
</feature>
<feature type="disulfide bond" evidence="1">
    <location>
        <begin position="187"/>
        <end position="200"/>
    </location>
</feature>
<feature type="sequence conflict" description="In Ref. 1; AAQ11226." evidence="4" ref="1">
    <original>N</original>
    <variation>S</variation>
    <location>
        <position position="142"/>
    </location>
</feature>
<reference key="1">
    <citation type="submission" date="2002-08" db="EMBL/GenBank/DDBJ databases">
        <title>Tetraspanin-5 is upregulated after lesion in the hippocampus.</title>
        <authorList>
            <person name="Braeuer A.U."/>
            <person name="Savaskan N.E."/>
            <person name="Ninnemann O."/>
            <person name="Nitsch R."/>
        </authorList>
    </citation>
    <scope>NUCLEOTIDE SEQUENCE [MRNA]</scope>
    <source>
        <strain>Wistar</strain>
        <tissue>Brain</tissue>
    </source>
</reference>
<reference key="2">
    <citation type="journal article" date="2004" name="Genome Res.">
        <title>The status, quality, and expansion of the NIH full-length cDNA project: the Mammalian Gene Collection (MGC).</title>
        <authorList>
            <consortium name="The MGC Project Team"/>
        </authorList>
    </citation>
    <scope>NUCLEOTIDE SEQUENCE [LARGE SCALE MRNA]</scope>
    <source>
        <tissue>Brain</tissue>
    </source>
</reference>
<organism>
    <name type="scientific">Rattus norvegicus</name>
    <name type="common">Rat</name>
    <dbReference type="NCBI Taxonomy" id="10116"/>
    <lineage>
        <taxon>Eukaryota</taxon>
        <taxon>Metazoa</taxon>
        <taxon>Chordata</taxon>
        <taxon>Craniata</taxon>
        <taxon>Vertebrata</taxon>
        <taxon>Euteleostomi</taxon>
        <taxon>Mammalia</taxon>
        <taxon>Eutheria</taxon>
        <taxon>Euarchontoglires</taxon>
        <taxon>Glires</taxon>
        <taxon>Rodentia</taxon>
        <taxon>Myomorpha</taxon>
        <taxon>Muroidea</taxon>
        <taxon>Muridae</taxon>
        <taxon>Murinae</taxon>
        <taxon>Rattus</taxon>
    </lineage>
</organism>
<sequence>MSGKHYKGPEVSCCIKYFIFGFNVIFWFLGITFLGIGLWAWNEKGVLSNISSITDLGGFDPVWLFLVVGGVMFILGFAGCIGALRENTFLLKFFSVFLGIIFFLELTAGVLAFVFKDWIKDQLYFFINNNIRAYRDDIDLQNLIDFTQEYWQCCGAFGADDWNLNIYFNCTDSNASRERCGVPFSCCTKDPAEDVINTQCGYDARQKPEVDQQIVIYTKGCVPQFEKWLQDNLTIVAGIFIGIALLQIFGICLAQNLVSDIEAVRASW</sequence>